<comment type="function">
    <text evidence="1">Component of the DNA-dependent RNA polymerase that catalyzes the transcription in the cytoplasm of viral DNA into RNA using the four ribonucleoside triphosphates as substrates.</text>
</comment>
<comment type="similarity">
    <text evidence="2">Belongs to the archaeal Rpo5/eukaryotic RPB5 RNA polymerase subunit family.</text>
</comment>
<proteinExistence type="inferred from homology"/>
<reference key="1">
    <citation type="journal article" date="2001" name="Virology">
        <title>Analysis of the first complete DNA sequence of an invertebrate iridovirus: coding strategy of the genome of Chilo iridescent virus.</title>
        <authorList>
            <person name="Jakob N.J."/>
            <person name="Mueller K."/>
            <person name="Bahr U."/>
            <person name="Darai G."/>
        </authorList>
    </citation>
    <scope>NUCLEOTIDE SEQUENCE [LARGE SCALE GENOMIC DNA]</scope>
</reference>
<reference key="2">
    <citation type="journal article" date="2007" name="Virol. J.">
        <title>Comparative genomic analysis of the family Iridoviridae: re-annotating and defining the core set of iridovirus genes.</title>
        <authorList>
            <person name="Eaton H.E."/>
            <person name="Metcalf J."/>
            <person name="Penny E."/>
            <person name="Tcherepanov V."/>
            <person name="Upton C."/>
            <person name="Brunetti C.R."/>
        </authorList>
    </citation>
    <scope>GENOME REANNOTATION</scope>
</reference>
<organism>
    <name type="scientific">Invertebrate iridescent virus 6</name>
    <name type="common">IIV-6</name>
    <name type="synonym">Chilo iridescent virus</name>
    <dbReference type="NCBI Taxonomy" id="176652"/>
    <lineage>
        <taxon>Viruses</taxon>
        <taxon>Varidnaviria</taxon>
        <taxon>Bamfordvirae</taxon>
        <taxon>Nucleocytoviricota</taxon>
        <taxon>Megaviricetes</taxon>
        <taxon>Pimascovirales</taxon>
        <taxon>Iridoviridae</taxon>
        <taxon>Betairidovirinae</taxon>
        <taxon>Iridovirus</taxon>
    </lineage>
</organism>
<accession>Q91F72</accession>
<sequence length="184" mass="21366">MFSKSYQITKEMYEARGWQIIKEDELTILAKVNSRENTNPEFAIAKFIKTTQEIKSPPLSQIIDFSSNEYVCVTIICDGSITTNVKKIEQTTKGKVEIFHNKDLQMNITKYHLQPLFNKLLDEEAKDFKKKYIKCKIENGKKIILQSFPSMSKSDPIARFFKYQSGDVIKITNKDGFVSYRIVK</sequence>
<keyword id="KW-0240">DNA-directed RNA polymerase</keyword>
<keyword id="KW-0548">Nucleotidyltransferase</keyword>
<keyword id="KW-1185">Reference proteome</keyword>
<keyword id="KW-0804">Transcription</keyword>
<keyword id="KW-0808">Transferase</keyword>
<feature type="chain" id="PRO_0000377510" description="Putative DNA-directed RNA polymerase subunit 454R">
    <location>
        <begin position="1"/>
        <end position="184"/>
    </location>
</feature>
<dbReference type="EMBL" id="AF303741">
    <property type="protein sequence ID" value="AAK82314.1"/>
    <property type="molecule type" value="Genomic_DNA"/>
</dbReference>
<dbReference type="RefSeq" id="NP_149917.1">
    <property type="nucleotide sequence ID" value="NC_003038.1"/>
</dbReference>
<dbReference type="SMR" id="Q91F72"/>
<dbReference type="KEGG" id="vg:1732998"/>
<dbReference type="OrthoDB" id="35870at10239"/>
<dbReference type="Proteomes" id="UP000001359">
    <property type="component" value="Genome"/>
</dbReference>
<dbReference type="GO" id="GO:0000428">
    <property type="term" value="C:DNA-directed RNA polymerase complex"/>
    <property type="evidence" value="ECO:0007669"/>
    <property type="project" value="UniProtKB-KW"/>
</dbReference>
<dbReference type="GO" id="GO:0003677">
    <property type="term" value="F:DNA binding"/>
    <property type="evidence" value="ECO:0007669"/>
    <property type="project" value="InterPro"/>
</dbReference>
<dbReference type="GO" id="GO:0003899">
    <property type="term" value="F:DNA-directed RNA polymerase activity"/>
    <property type="evidence" value="ECO:0007669"/>
    <property type="project" value="InterPro"/>
</dbReference>
<dbReference type="GO" id="GO:0006366">
    <property type="term" value="P:transcription by RNA polymerase II"/>
    <property type="evidence" value="ECO:0007669"/>
    <property type="project" value="TreeGrafter"/>
</dbReference>
<dbReference type="GO" id="GO:0006362">
    <property type="term" value="P:transcription elongation by RNA polymerase I"/>
    <property type="evidence" value="ECO:0007669"/>
    <property type="project" value="TreeGrafter"/>
</dbReference>
<dbReference type="GO" id="GO:0042797">
    <property type="term" value="P:tRNA transcription by RNA polymerase III"/>
    <property type="evidence" value="ECO:0007669"/>
    <property type="project" value="TreeGrafter"/>
</dbReference>
<dbReference type="Gene3D" id="3.90.940.20">
    <property type="entry name" value="RPB5-like RNA polymerase subunit"/>
    <property type="match status" value="1"/>
</dbReference>
<dbReference type="InterPro" id="IPR014381">
    <property type="entry name" value="Arch_Rpo5/euc_Rpb5"/>
</dbReference>
<dbReference type="InterPro" id="IPR000783">
    <property type="entry name" value="RNA_pol_subH/Rpb5_C"/>
</dbReference>
<dbReference type="InterPro" id="IPR035913">
    <property type="entry name" value="RPB5-like_sf"/>
</dbReference>
<dbReference type="PANTHER" id="PTHR10535">
    <property type="entry name" value="DNA-DIRECTED RNA POLYMERASES I, II, AND III SUBUNIT RPABC1"/>
    <property type="match status" value="1"/>
</dbReference>
<dbReference type="PANTHER" id="PTHR10535:SF0">
    <property type="entry name" value="DNA-DIRECTED RNA POLYMERASES I, II, AND III SUBUNIT RPABC1"/>
    <property type="match status" value="1"/>
</dbReference>
<dbReference type="Pfam" id="PF01191">
    <property type="entry name" value="RNA_pol_Rpb5_C"/>
    <property type="match status" value="1"/>
</dbReference>
<dbReference type="PIRSF" id="PIRSF000747">
    <property type="entry name" value="RPB5"/>
    <property type="match status" value="1"/>
</dbReference>
<dbReference type="SUPFAM" id="SSF55287">
    <property type="entry name" value="RPB5-like RNA polymerase subunit"/>
    <property type="match status" value="1"/>
</dbReference>
<organismHost>
    <name type="scientific">Acheta domesticus</name>
    <name type="common">House cricket</name>
    <dbReference type="NCBI Taxonomy" id="6997"/>
</organismHost>
<organismHost>
    <name type="scientific">Chilo suppressalis</name>
    <name type="common">Asiatic rice borer moth</name>
    <dbReference type="NCBI Taxonomy" id="168631"/>
</organismHost>
<organismHost>
    <name type="scientific">Gryllus bimaculatus</name>
    <name type="common">Two-spotted cricket</name>
    <dbReference type="NCBI Taxonomy" id="6999"/>
</organismHost>
<organismHost>
    <name type="scientific">Gryllus campestris</name>
    <dbReference type="NCBI Taxonomy" id="58607"/>
</organismHost>
<organismHost>
    <name type="scientific">Spodoptera frugiperda</name>
    <name type="common">Fall armyworm</name>
    <dbReference type="NCBI Taxonomy" id="7108"/>
</organismHost>
<name>454R_IIV6</name>
<gene>
    <name type="ORF">IIV6-454R</name>
</gene>
<evidence type="ECO:0000250" key="1"/>
<evidence type="ECO:0000305" key="2"/>
<protein>
    <recommendedName>
        <fullName>Putative DNA-directed RNA polymerase subunit 454R</fullName>
    </recommendedName>
</protein>